<feature type="chain" id="PRO_0000438399" description="3-ketosteroid-9-alpha-monooxygenase, oxygenase component">
    <location>
        <begin position="1"/>
        <end position="394"/>
    </location>
</feature>
<feature type="domain" description="Rieske" evidence="2">
    <location>
        <begin position="27"/>
        <end position="129"/>
    </location>
</feature>
<feature type="binding site" evidence="2 4">
    <location>
        <position position="68"/>
    </location>
    <ligand>
        <name>[2Fe-2S] cluster</name>
        <dbReference type="ChEBI" id="CHEBI:190135"/>
    </ligand>
</feature>
<feature type="binding site" evidence="2 4">
    <location>
        <position position="70"/>
    </location>
    <ligand>
        <name>[2Fe-2S] cluster</name>
        <dbReference type="ChEBI" id="CHEBI:190135"/>
    </ligand>
</feature>
<feature type="binding site" evidence="2 4">
    <location>
        <position position="87"/>
    </location>
    <ligand>
        <name>[2Fe-2S] cluster</name>
        <dbReference type="ChEBI" id="CHEBI:190135"/>
    </ligand>
</feature>
<feature type="binding site" evidence="2 4">
    <location>
        <position position="90"/>
    </location>
    <ligand>
        <name>[2Fe-2S] cluster</name>
        <dbReference type="ChEBI" id="CHEBI:190135"/>
    </ligand>
</feature>
<feature type="binding site" evidence="1">
    <location>
        <position position="175"/>
    </location>
    <ligand>
        <name>Fe cation</name>
        <dbReference type="ChEBI" id="CHEBI:24875"/>
    </ligand>
</feature>
<feature type="binding site" evidence="1">
    <location>
        <position position="181"/>
    </location>
    <ligand>
        <name>Fe cation</name>
        <dbReference type="ChEBI" id="CHEBI:24875"/>
    </ligand>
</feature>
<feature type="binding site" evidence="4">
    <location>
        <position position="186"/>
    </location>
    <ligand>
        <name>Fe cation</name>
        <dbReference type="ChEBI" id="CHEBI:24875"/>
    </ligand>
</feature>
<feature type="binding site" evidence="4">
    <location>
        <position position="245"/>
    </location>
    <ligand>
        <name>substrate</name>
    </ligand>
</feature>
<feature type="binding site" evidence="4">
    <location>
        <position position="305"/>
    </location>
    <ligand>
        <name>Fe cation</name>
        <dbReference type="ChEBI" id="CHEBI:24875"/>
    </ligand>
</feature>
<feature type="strand" evidence="9">
    <location>
        <begin position="26"/>
        <end position="32"/>
    </location>
</feature>
<feature type="helix" evidence="9">
    <location>
        <begin position="33"/>
        <end position="36"/>
    </location>
</feature>
<feature type="strand" evidence="9">
    <location>
        <begin position="38"/>
        <end position="40"/>
    </location>
</feature>
<feature type="strand" evidence="9">
    <location>
        <begin position="42"/>
        <end position="46"/>
    </location>
</feature>
<feature type="strand" evidence="9">
    <location>
        <begin position="49"/>
        <end position="55"/>
    </location>
</feature>
<feature type="strand" evidence="9">
    <location>
        <begin position="61"/>
        <end position="67"/>
    </location>
</feature>
<feature type="turn" evidence="9">
    <location>
        <begin position="69"/>
        <end position="71"/>
    </location>
</feature>
<feature type="helix" evidence="9">
    <location>
        <begin position="75"/>
        <end position="77"/>
    </location>
</feature>
<feature type="strand" evidence="9">
    <location>
        <begin position="78"/>
        <end position="81"/>
    </location>
</feature>
<feature type="strand" evidence="9">
    <location>
        <begin position="84"/>
        <end position="86"/>
    </location>
</feature>
<feature type="turn" evidence="9">
    <location>
        <begin position="88"/>
        <end position="90"/>
    </location>
</feature>
<feature type="strand" evidence="9">
    <location>
        <begin position="98"/>
        <end position="102"/>
    </location>
</feature>
<feature type="strand" evidence="9">
    <location>
        <begin position="120"/>
        <end position="123"/>
    </location>
</feature>
<feature type="strand" evidence="9">
    <location>
        <begin position="126"/>
        <end position="131"/>
    </location>
</feature>
<feature type="helix" evidence="9">
    <location>
        <begin position="148"/>
        <end position="151"/>
    </location>
</feature>
<feature type="strand" evidence="9">
    <location>
        <begin position="159"/>
        <end position="167"/>
    </location>
</feature>
<feature type="helix" evidence="9">
    <location>
        <begin position="170"/>
        <end position="173"/>
    </location>
</feature>
<feature type="helix" evidence="9">
    <location>
        <begin position="174"/>
        <end position="177"/>
    </location>
</feature>
<feature type="helix" evidence="9">
    <location>
        <begin position="181"/>
        <end position="184"/>
    </location>
</feature>
<feature type="strand" evidence="9">
    <location>
        <begin position="188"/>
        <end position="198"/>
    </location>
</feature>
<feature type="strand" evidence="9">
    <location>
        <begin position="201"/>
        <end position="210"/>
    </location>
</feature>
<feature type="strand" evidence="9">
    <location>
        <begin position="226"/>
        <end position="246"/>
    </location>
</feature>
<feature type="strand" evidence="9">
    <location>
        <begin position="251"/>
        <end position="264"/>
    </location>
</feature>
<feature type="strand" evidence="9">
    <location>
        <begin position="267"/>
        <end position="277"/>
    </location>
</feature>
<feature type="turn" evidence="9">
    <location>
        <begin position="284"/>
        <end position="286"/>
    </location>
</feature>
<feature type="helix" evidence="9">
    <location>
        <begin position="287"/>
        <end position="310"/>
    </location>
</feature>
<feature type="helix" evidence="9">
    <location>
        <begin position="327"/>
        <end position="334"/>
    </location>
</feature>
<feature type="helix" evidence="9">
    <location>
        <begin position="335"/>
        <end position="338"/>
    </location>
</feature>
<feature type="helix" evidence="9">
    <location>
        <begin position="341"/>
        <end position="343"/>
    </location>
</feature>
<feature type="helix" evidence="9">
    <location>
        <begin position="346"/>
        <end position="349"/>
    </location>
</feature>
<feature type="strand" evidence="9">
    <location>
        <begin position="352"/>
        <end position="356"/>
    </location>
</feature>
<feature type="helix" evidence="9">
    <location>
        <begin position="359"/>
        <end position="375"/>
    </location>
</feature>
<feature type="helix" evidence="9">
    <location>
        <begin position="376"/>
        <end position="378"/>
    </location>
</feature>
<feature type="turn" evidence="9">
    <location>
        <begin position="379"/>
        <end position="383"/>
    </location>
</feature>
<keyword id="KW-0001">2Fe-2S</keyword>
<keyword id="KW-0002">3D-structure</keyword>
<keyword id="KW-0408">Iron</keyword>
<keyword id="KW-0411">Iron-sulfur</keyword>
<keyword id="KW-0442">Lipid degradation</keyword>
<keyword id="KW-0443">Lipid metabolism</keyword>
<keyword id="KW-0479">Metal-binding</keyword>
<keyword id="KW-0560">Oxidoreductase</keyword>
<keyword id="KW-0753">Steroid metabolism</keyword>
<protein>
    <recommendedName>
        <fullName evidence="5">3-ketosteroid-9-alpha-monooxygenase, oxygenase component</fullName>
    </recommendedName>
    <alternativeName>
        <fullName evidence="5">3-ketosteroid-9-alpha-hydroxylase, oxygenase component</fullName>
        <shortName evidence="5">KSH</shortName>
    </alternativeName>
    <alternativeName>
        <fullName evidence="6">Androsta-1,4-diene-3,17-dione 9-alpha-hydroxylase</fullName>
        <ecNumber evidence="4 7">1.14.15.30</ecNumber>
    </alternativeName>
    <alternativeName>
        <fullName evidence="8">Rieske-type oxygenase</fullName>
        <shortName evidence="8">RO</shortName>
    </alternativeName>
</protein>
<accession>F1CMX0</accession>
<sequence length="394" mass="45020">MSLGTSEQSEIREIVAGSAPARFARGWHCLGLAKDFKDGKPHSVHAFGTKLVVWADSNDEIRILDAYCRHMGGDLSQGTVKGDEIACPFHDWRWGGNGRCKNIPYARRVPPIAKTRAWHTLDQDGLLFVWHDPQGNPPPADVTIPRIAGATSDEWTDWVWYTTEVDTNCREIIDNIVDMAHFFYVHYSFPVYFKNVFEGHVASQFMRGQAREDTRPHANGQPKMIGSRSDASYFGPSFMIDDLVYEYEGYDVESVLINCHYPVSQDKFVLMYGMIVKKSDRLEGEKALQTAQQFGNFIAKGFEQDIEIWRNKTRIDNPLLCEEDGPVYQLRRWYEQFYVDVEDVAPEMTDRFEFEMDTTRPVAAWMKEVEANIARKAALDTETRSAPEQSTTAG</sequence>
<reference key="1">
    <citation type="journal article" date="2011" name="J. Bacteriol.">
        <title>Multiplicity of 3-ketosteroid-9alpha-hydroxylase enzymes in Rhodococcus rhodochrous DSM43269 for specific degradation of different classes of steroids.</title>
        <authorList>
            <person name="Petrusma M."/>
            <person name="Hessels G."/>
            <person name="Dijkhuizen L."/>
            <person name="van der Geize R."/>
        </authorList>
    </citation>
    <scope>NUCLEOTIDE SEQUENCE [GENOMIC DNA]</scope>
    <scope>FUNCTION</scope>
    <scope>CATALYTIC ACTIVITY</scope>
    <scope>INDUCTION</scope>
    <scope>SUBSTRATE SPECIFICITY</scope>
    <source>
        <strain>DSM 43269</strain>
    </source>
</reference>
<reference key="2">
    <citation type="journal article" date="2014" name="J. Biol. Chem.">
        <title>Substrate specificities and conformational flexibility of 3-ketosteroid 9alpha-hydroxylases.</title>
        <authorList>
            <person name="Penfield J.S."/>
            <person name="Worrall L.J."/>
            <person name="Strynadka N.C."/>
            <person name="Eltis L.D."/>
        </authorList>
    </citation>
    <scope>X-RAY CRYSTALLOGRAPHY (2.43 ANGSTROMS) IN COMPLEX WITH SUBSTRATE ANALOG; IRON ION AND IRON-SULFUR (2FE-2S)</scope>
    <scope>FUNCTION</scope>
    <scope>CATALYTIC ACTIVITY</scope>
    <scope>BIOPHYSICOCHEMICAL PROPERTIES</scope>
    <scope>COFACTOR</scope>
    <scope>SUBUNIT</scope>
    <scope>SUBSTRATE SPECIFICITY</scope>
</reference>
<comment type="function">
    <text evidence="3 4">May be involved in the degradation of cholic acid, a steroid acid found predominantly in the bile (PubMed:21642460). In vitro, catalyzes the introduction of a 9alpha-hydroxyl moiety into the ring B of 3-ketosteroid substrates such as 1,4-androstadiene-3,17-dione (ADD), 4-androstene-3,17-dione (AD), 4-androstene-17beta-ol-3-one (testosterone), 4-pregnene-3,20-dione (progesterone), 3-oxo-23,24-bisnorcholesta-4-en-22-oate (4-BNC), 23,24-bisnorcholesta-4-ene-22-oate, 3-oxo-23,24-bisnorcholaesta-1,4-dien-22-oate (1,4-BNC), 23,24-bisnorcholesta-1,4-diene-22-oate and 3-oxo-23,24-bisnorcholesta-1,4-dien-22-oyl-coenzyme A thioester (1,4-BNC-CoA) (PubMed:21642460, PubMed:25049233). KshA1 has the highest specificity for steroids possessing an isopropionyl side chain at C17 (PubMed:25049233).</text>
</comment>
<comment type="catalytic activity">
    <reaction evidence="4 7">
        <text>androsta-1,4-diene-3,17-dione + 2 reduced [2Fe-2S]-[ferredoxin] + O2 + 2 H(+) = 9alpha-hydroxyandrosta-1,4-diene-3,17-dione + 2 oxidized [2Fe-2S]-[ferredoxin] + H2O</text>
        <dbReference type="Rhea" id="RHEA:32199"/>
        <dbReference type="Rhea" id="RHEA-COMP:10000"/>
        <dbReference type="Rhea" id="RHEA-COMP:10001"/>
        <dbReference type="ChEBI" id="CHEBI:15377"/>
        <dbReference type="ChEBI" id="CHEBI:15378"/>
        <dbReference type="ChEBI" id="CHEBI:15379"/>
        <dbReference type="ChEBI" id="CHEBI:33737"/>
        <dbReference type="ChEBI" id="CHEBI:33738"/>
        <dbReference type="ChEBI" id="CHEBI:40799"/>
        <dbReference type="ChEBI" id="CHEBI:63641"/>
        <dbReference type="EC" id="1.14.15.30"/>
    </reaction>
</comment>
<comment type="cofactor">
    <cofactor evidence="2 4">
        <name>[2Fe-2S] cluster</name>
        <dbReference type="ChEBI" id="CHEBI:190135"/>
    </cofactor>
    <text evidence="2 4">Binds 1 [2Fe-2S] cluster per subunit.</text>
</comment>
<comment type="cofactor">
    <cofactor evidence="4">
        <name>Fe cation</name>
        <dbReference type="ChEBI" id="CHEBI:24875"/>
    </cofactor>
    <text evidence="4">Binds 1 Fe cation.</text>
</comment>
<comment type="biophysicochemical properties">
    <kinetics>
        <KM evidence="4">1 uM for 1,4-BNC as substrate (at pH 7.0 and 22 degrees Celsius)</KM>
        <KM evidence="4">2 uM for 1,4-BNC-CoA as substrate (at pH 7.0 and 22 degrees Celsius)</KM>
        <KM evidence="4">2.2 uM for 4-BNC as substrate (at pH 7.0 and 22 degrees Celsius)</KM>
        <KM evidence="4">50 uM for ADD as substrate (at pH 7.0 and 22 degrees Celsius)</KM>
        <KM evidence="4">110 uM for testosterone as substrate (at pH 7.0 and 22 degrees Celsius)</KM>
        <KM evidence="4">400 uM for AD as substrate (at pH 7.0 and 22 degrees Celsius)</KM>
        <text evidence="4">kcat is 2.6 sec(-1) for 4-BNC as substrate (at pH 7.0 and 22 degrees Celsius). kcat is 1.4 sec(-1) for testosterone as substrate (at pH 7.0 and 22 degrees Celsius). kcat is 1.3 sec(-1) for ADD as substrate (at pH 7.0 and 22 degrees Celsius). kcat is 1.1 sec(-1) for 1,4-BNC-CoA as substrate (at pH 7.0 and 22 degrees Celsius). kcat is 0.9 sec(-1) for 1,4-BNC as substrate (at pH 7.0 and 22 degrees Celsius). kcat is 0.5 sec(-1) for AD as substrate (at pH 7.0 and 22 degrees Celsius).</text>
    </kinetics>
</comment>
<comment type="subunit">
    <text evidence="4">Homotrimer. The two-component system 3-ketosteroid-9-alpha-monooxygenase is composed of an oxygenase component KshA and a reductase component KshB.</text>
</comment>
<comment type="induction">
    <text evidence="3">By cholic acid.</text>
</comment>
<proteinExistence type="evidence at protein level"/>
<organism>
    <name type="scientific">Rhodococcus rhodochrous</name>
    <dbReference type="NCBI Taxonomy" id="1829"/>
    <lineage>
        <taxon>Bacteria</taxon>
        <taxon>Bacillati</taxon>
        <taxon>Actinomycetota</taxon>
        <taxon>Actinomycetes</taxon>
        <taxon>Mycobacteriales</taxon>
        <taxon>Nocardiaceae</taxon>
        <taxon>Rhodococcus</taxon>
    </lineage>
</organism>
<dbReference type="EC" id="1.14.15.30" evidence="4 7"/>
<dbReference type="EMBL" id="HQ425873">
    <property type="protein sequence ID" value="ADY18310.1"/>
    <property type="molecule type" value="Genomic_DNA"/>
</dbReference>
<dbReference type="RefSeq" id="WP_059382524.1">
    <property type="nucleotide sequence ID" value="NZ_LT906450.1"/>
</dbReference>
<dbReference type="PDB" id="4QDF">
    <property type="method" value="X-ray"/>
    <property type="resolution" value="2.43 A"/>
    <property type="chains" value="B=1-394"/>
</dbReference>
<dbReference type="PDBsum" id="4QDF"/>
<dbReference type="SMR" id="F1CMX0"/>
<dbReference type="STRING" id="1829.GCA_000716895_02108"/>
<dbReference type="BRENDA" id="1.14.15.30">
    <property type="organism ID" value="5395"/>
</dbReference>
<dbReference type="EvolutionaryTrace" id="F1CMX0"/>
<dbReference type="GO" id="GO:0051537">
    <property type="term" value="F:2 iron, 2 sulfur cluster binding"/>
    <property type="evidence" value="ECO:0000314"/>
    <property type="project" value="UniProtKB"/>
</dbReference>
<dbReference type="GO" id="GO:0036200">
    <property type="term" value="F:3-ketosteroid 9-alpha-monooxygenase activity"/>
    <property type="evidence" value="ECO:0000314"/>
    <property type="project" value="UniProtKB"/>
</dbReference>
<dbReference type="GO" id="GO:0005506">
    <property type="term" value="F:iron ion binding"/>
    <property type="evidence" value="ECO:0000314"/>
    <property type="project" value="UniProtKB"/>
</dbReference>
<dbReference type="GO" id="GO:0008203">
    <property type="term" value="P:cholesterol metabolic process"/>
    <property type="evidence" value="ECO:0007669"/>
    <property type="project" value="InterPro"/>
</dbReference>
<dbReference type="GO" id="GO:0016042">
    <property type="term" value="P:lipid catabolic process"/>
    <property type="evidence" value="ECO:0007669"/>
    <property type="project" value="UniProtKB-KW"/>
</dbReference>
<dbReference type="CDD" id="cd03531">
    <property type="entry name" value="Rieske_RO_Alpha_KSH"/>
    <property type="match status" value="1"/>
</dbReference>
<dbReference type="FunFam" id="2.102.10.10:FF:000012">
    <property type="entry name" value="3-ketosteroid-9-alpha-hydroxylase oxygenase subunit"/>
    <property type="match status" value="1"/>
</dbReference>
<dbReference type="FunFam" id="3.90.380.10:FF:000004">
    <property type="entry name" value="3-ketosteroid-9-alpha-hydroxylase oxygenase subunit"/>
    <property type="match status" value="1"/>
</dbReference>
<dbReference type="Gene3D" id="3.90.380.10">
    <property type="entry name" value="Naphthalene 1,2-dioxygenase Alpha Subunit, Chain A, domain 1"/>
    <property type="match status" value="1"/>
</dbReference>
<dbReference type="Gene3D" id="2.102.10.10">
    <property type="entry name" value="Rieske [2Fe-2S] iron-sulphur domain"/>
    <property type="match status" value="1"/>
</dbReference>
<dbReference type="InterPro" id="IPR050584">
    <property type="entry name" value="Cholesterol_7-desaturase"/>
</dbReference>
<dbReference type="InterPro" id="IPR045605">
    <property type="entry name" value="KshA-like_C"/>
</dbReference>
<dbReference type="InterPro" id="IPR017941">
    <property type="entry name" value="Rieske_2Fe-2S"/>
</dbReference>
<dbReference type="InterPro" id="IPR036922">
    <property type="entry name" value="Rieske_2Fe-2S_sf"/>
</dbReference>
<dbReference type="PANTHER" id="PTHR21266:SF60">
    <property type="entry name" value="3-KETOSTEROID-9-ALPHA-MONOOXYGENASE, OXYGENASE COMPONENT"/>
    <property type="match status" value="1"/>
</dbReference>
<dbReference type="PANTHER" id="PTHR21266">
    <property type="entry name" value="IRON-SULFUR DOMAIN CONTAINING PROTEIN"/>
    <property type="match status" value="1"/>
</dbReference>
<dbReference type="Pfam" id="PF19298">
    <property type="entry name" value="KshA_C"/>
    <property type="match status" value="1"/>
</dbReference>
<dbReference type="Pfam" id="PF00355">
    <property type="entry name" value="Rieske"/>
    <property type="match status" value="1"/>
</dbReference>
<dbReference type="SUPFAM" id="SSF55961">
    <property type="entry name" value="Bet v1-like"/>
    <property type="match status" value="1"/>
</dbReference>
<dbReference type="SUPFAM" id="SSF50022">
    <property type="entry name" value="ISP domain"/>
    <property type="match status" value="1"/>
</dbReference>
<dbReference type="PROSITE" id="PS51296">
    <property type="entry name" value="RIESKE"/>
    <property type="match status" value="1"/>
</dbReference>
<gene>
    <name evidence="5" type="primary">kshA</name>
    <name evidence="5" type="synonym">kshA1</name>
</gene>
<evidence type="ECO:0000250" key="1">
    <source>
        <dbReference type="UniProtKB" id="F1CMY8"/>
    </source>
</evidence>
<evidence type="ECO:0000255" key="2">
    <source>
        <dbReference type="PROSITE-ProRule" id="PRU00628"/>
    </source>
</evidence>
<evidence type="ECO:0000269" key="3">
    <source>
    </source>
</evidence>
<evidence type="ECO:0000269" key="4">
    <source>
    </source>
</evidence>
<evidence type="ECO:0000303" key="5">
    <source>
    </source>
</evidence>
<evidence type="ECO:0000303" key="6">
    <source>
    </source>
</evidence>
<evidence type="ECO:0000305" key="7">
    <source>
    </source>
</evidence>
<evidence type="ECO:0000305" key="8">
    <source>
    </source>
</evidence>
<evidence type="ECO:0007829" key="9">
    <source>
        <dbReference type="PDB" id="4QDF"/>
    </source>
</evidence>
<name>KSHA1_RHORH</name>